<accession>Q9W6A6</accession>
<accession>Q8AYM6</accession>
<feature type="chain" id="PRO_0000197778" description="Green-sensitive opsin-4">
    <location>
        <begin position="1"/>
        <end position="349"/>
    </location>
</feature>
<feature type="topological domain" description="Extracellular" evidence="2">
    <location>
        <begin position="1"/>
        <end position="36"/>
    </location>
</feature>
<feature type="transmembrane region" description="Helical; Name=1" evidence="2">
    <location>
        <begin position="37"/>
        <end position="61"/>
    </location>
</feature>
<feature type="topological domain" description="Cytoplasmic" evidence="2">
    <location>
        <begin position="62"/>
        <end position="73"/>
    </location>
</feature>
<feature type="transmembrane region" description="Helical; Name=2" evidence="2">
    <location>
        <begin position="74"/>
        <end position="99"/>
    </location>
</feature>
<feature type="topological domain" description="Extracellular" evidence="2">
    <location>
        <begin position="100"/>
        <end position="113"/>
    </location>
</feature>
<feature type="transmembrane region" description="Helical; Name=3" evidence="2">
    <location>
        <begin position="114"/>
        <end position="133"/>
    </location>
</feature>
<feature type="topological domain" description="Cytoplasmic" evidence="2">
    <location>
        <begin position="134"/>
        <end position="152"/>
    </location>
</feature>
<feature type="transmembrane region" description="Helical; Name=4" evidence="2">
    <location>
        <begin position="153"/>
        <end position="176"/>
    </location>
</feature>
<feature type="topological domain" description="Extracellular" evidence="2">
    <location>
        <begin position="177"/>
        <end position="202"/>
    </location>
</feature>
<feature type="transmembrane region" description="Helical; Name=5" evidence="2">
    <location>
        <begin position="203"/>
        <end position="230"/>
    </location>
</feature>
<feature type="topological domain" description="Cytoplasmic" evidence="2">
    <location>
        <begin position="231"/>
        <end position="252"/>
    </location>
</feature>
<feature type="transmembrane region" description="Helical; Name=6" evidence="2">
    <location>
        <begin position="253"/>
        <end position="276"/>
    </location>
</feature>
<feature type="topological domain" description="Extracellular" evidence="2">
    <location>
        <begin position="277"/>
        <end position="284"/>
    </location>
</feature>
<feature type="transmembrane region" description="Helical; Name=7" evidence="2">
    <location>
        <begin position="285"/>
        <end position="309"/>
    </location>
</feature>
<feature type="topological domain" description="Cytoplasmic" evidence="2">
    <location>
        <begin position="310"/>
        <end position="349"/>
    </location>
</feature>
<feature type="region of interest" description="Disordered" evidence="4">
    <location>
        <begin position="329"/>
        <end position="349"/>
    </location>
</feature>
<feature type="compositionally biased region" description="Low complexity" evidence="4">
    <location>
        <begin position="334"/>
        <end position="349"/>
    </location>
</feature>
<feature type="modified residue" description="N6-(retinylidene)lysine" evidence="1">
    <location>
        <position position="296"/>
    </location>
</feature>
<feature type="glycosylation site" description="N-linked (GlcNAc...) asparagine" evidence="2">
    <location>
        <position position="2"/>
    </location>
</feature>
<feature type="glycosylation site" description="N-linked (GlcNAc...) asparagine" evidence="2">
    <location>
        <position position="15"/>
    </location>
</feature>
<feature type="glycosylation site" description="N-linked (GlcNAc...) asparagine" evidence="2">
    <location>
        <position position="200"/>
    </location>
</feature>
<feature type="disulfide bond" evidence="3">
    <location>
        <begin position="110"/>
        <end position="187"/>
    </location>
</feature>
<feature type="sequence conflict" description="In Ref. 1; AAD24753." evidence="7" ref="1">
    <original>S</original>
    <variation>P</variation>
    <location>
        <position position="176"/>
    </location>
</feature>
<sequence length="349" mass="38706">MNGTEGNNFYIPLSNRTGLARSPYEYPQYYLAEPWQFKLLAVYMFFLICLGFPINGLTLLVTAQHKKLRQPLNFILVNLAVAGTIMVCFGFTVTFYTAINGYFVLGPTGCAIEGFMATLGGEVALWSLVVLAVERYIVVCKPMGSFKFSASHAFAGCAFTWVMAMACAAPPLVGWSRYIPEGMQCSCGPDYYTLNPEYNNESYVLYMFICHFILPVTIIFFTYGRLVCTVKAAAAQQQESESTQKAEREVTRMVILMVLGFLIAWTPYATVAAWIFFNKGAAFSAQFMAVPAFFSKTSALYNPVIYVLLNKQFRNCMLTTLFCGKNPLGDDESSTVSTSKTEVSSVSPA</sequence>
<protein>
    <recommendedName>
        <fullName>Green-sensitive opsin-4</fullName>
    </recommendedName>
    <alternativeName>
        <fullName>Green cone photoreceptor pigment 4</fullName>
    </alternativeName>
    <alternativeName>
        <fullName>Opsin RH2-4</fullName>
    </alternativeName>
    <alternativeName>
        <fullName>Opsin-1, medium-wave-sensitive 4</fullName>
    </alternativeName>
</protein>
<gene>
    <name type="primary">opn1mw4</name>
    <name type="synonym">grops2</name>
    <name type="synonym">rh24</name>
</gene>
<name>OPSG4_DANRE</name>
<proteinExistence type="evidence at protein level"/>
<evidence type="ECO:0000250" key="1"/>
<evidence type="ECO:0000255" key="2"/>
<evidence type="ECO:0000255" key="3">
    <source>
        <dbReference type="PROSITE-ProRule" id="PRU00521"/>
    </source>
</evidence>
<evidence type="ECO:0000256" key="4">
    <source>
        <dbReference type="SAM" id="MobiDB-lite"/>
    </source>
</evidence>
<evidence type="ECO:0000269" key="5">
    <source>
    </source>
</evidence>
<evidence type="ECO:0000269" key="6">
    <source>
    </source>
</evidence>
<evidence type="ECO:0000305" key="7"/>
<reference key="1">
    <citation type="journal article" date="1999" name="Vis. Neurosci.">
        <title>Cloning and characterization of six zebrafish photoreceptor opsin cDNAs and immunolocalization of their corresponding proteins.</title>
        <authorList>
            <person name="Vihtelic T.S."/>
            <person name="Doro C.J."/>
            <person name="Hyde D.R."/>
        </authorList>
    </citation>
    <scope>NUCLEOTIDE SEQUENCE [MRNA]</scope>
    <scope>TISSUE SPECIFICITY</scope>
    <source>
        <tissue>Eye</tissue>
    </source>
</reference>
<reference key="2">
    <citation type="journal article" date="2003" name="Genetics">
        <title>Gene duplication and spectral diversification of cone visual pigments of zebrafish.</title>
        <authorList>
            <person name="Chinen A."/>
            <person name="Hamaoka T."/>
            <person name="Yamada Y."/>
            <person name="Kawamura S."/>
        </authorList>
    </citation>
    <scope>NUCLEOTIDE SEQUENCE [GENOMIC DNA / MRNA]</scope>
    <scope>BIOPHYSICOCHEMICAL PROPERTIES</scope>
    <source>
        <strain>AB</strain>
        <tissue>Eye</tissue>
    </source>
</reference>
<reference key="3">
    <citation type="journal article" date="2013" name="Nature">
        <title>The zebrafish reference genome sequence and its relationship to the human genome.</title>
        <authorList>
            <person name="Howe K."/>
            <person name="Clark M.D."/>
            <person name="Torroja C.F."/>
            <person name="Torrance J."/>
            <person name="Berthelot C."/>
            <person name="Muffato M."/>
            <person name="Collins J.E."/>
            <person name="Humphray S."/>
            <person name="McLaren K."/>
            <person name="Matthews L."/>
            <person name="McLaren S."/>
            <person name="Sealy I."/>
            <person name="Caccamo M."/>
            <person name="Churcher C."/>
            <person name="Scott C."/>
            <person name="Barrett J.C."/>
            <person name="Koch R."/>
            <person name="Rauch G.J."/>
            <person name="White S."/>
            <person name="Chow W."/>
            <person name="Kilian B."/>
            <person name="Quintais L.T."/>
            <person name="Guerra-Assuncao J.A."/>
            <person name="Zhou Y."/>
            <person name="Gu Y."/>
            <person name="Yen J."/>
            <person name="Vogel J.H."/>
            <person name="Eyre T."/>
            <person name="Redmond S."/>
            <person name="Banerjee R."/>
            <person name="Chi J."/>
            <person name="Fu B."/>
            <person name="Langley E."/>
            <person name="Maguire S.F."/>
            <person name="Laird G.K."/>
            <person name="Lloyd D."/>
            <person name="Kenyon E."/>
            <person name="Donaldson S."/>
            <person name="Sehra H."/>
            <person name="Almeida-King J."/>
            <person name="Loveland J."/>
            <person name="Trevanion S."/>
            <person name="Jones M."/>
            <person name="Quail M."/>
            <person name="Willey D."/>
            <person name="Hunt A."/>
            <person name="Burton J."/>
            <person name="Sims S."/>
            <person name="McLay K."/>
            <person name="Plumb B."/>
            <person name="Davis J."/>
            <person name="Clee C."/>
            <person name="Oliver K."/>
            <person name="Clark R."/>
            <person name="Riddle C."/>
            <person name="Elliot D."/>
            <person name="Threadgold G."/>
            <person name="Harden G."/>
            <person name="Ware D."/>
            <person name="Begum S."/>
            <person name="Mortimore B."/>
            <person name="Kerry G."/>
            <person name="Heath P."/>
            <person name="Phillimore B."/>
            <person name="Tracey A."/>
            <person name="Corby N."/>
            <person name="Dunn M."/>
            <person name="Johnson C."/>
            <person name="Wood J."/>
            <person name="Clark S."/>
            <person name="Pelan S."/>
            <person name="Griffiths G."/>
            <person name="Smith M."/>
            <person name="Glithero R."/>
            <person name="Howden P."/>
            <person name="Barker N."/>
            <person name="Lloyd C."/>
            <person name="Stevens C."/>
            <person name="Harley J."/>
            <person name="Holt K."/>
            <person name="Panagiotidis G."/>
            <person name="Lovell J."/>
            <person name="Beasley H."/>
            <person name="Henderson C."/>
            <person name="Gordon D."/>
            <person name="Auger K."/>
            <person name="Wright D."/>
            <person name="Collins J."/>
            <person name="Raisen C."/>
            <person name="Dyer L."/>
            <person name="Leung K."/>
            <person name="Robertson L."/>
            <person name="Ambridge K."/>
            <person name="Leongamornlert D."/>
            <person name="McGuire S."/>
            <person name="Gilderthorp R."/>
            <person name="Griffiths C."/>
            <person name="Manthravadi D."/>
            <person name="Nichol S."/>
            <person name="Barker G."/>
            <person name="Whitehead S."/>
            <person name="Kay M."/>
            <person name="Brown J."/>
            <person name="Murnane C."/>
            <person name="Gray E."/>
            <person name="Humphries M."/>
            <person name="Sycamore N."/>
            <person name="Barker D."/>
            <person name="Saunders D."/>
            <person name="Wallis J."/>
            <person name="Babbage A."/>
            <person name="Hammond S."/>
            <person name="Mashreghi-Mohammadi M."/>
            <person name="Barr L."/>
            <person name="Martin S."/>
            <person name="Wray P."/>
            <person name="Ellington A."/>
            <person name="Matthews N."/>
            <person name="Ellwood M."/>
            <person name="Woodmansey R."/>
            <person name="Clark G."/>
            <person name="Cooper J."/>
            <person name="Tromans A."/>
            <person name="Grafham D."/>
            <person name="Skuce C."/>
            <person name="Pandian R."/>
            <person name="Andrews R."/>
            <person name="Harrison E."/>
            <person name="Kimberley A."/>
            <person name="Garnett J."/>
            <person name="Fosker N."/>
            <person name="Hall R."/>
            <person name="Garner P."/>
            <person name="Kelly D."/>
            <person name="Bird C."/>
            <person name="Palmer S."/>
            <person name="Gehring I."/>
            <person name="Berger A."/>
            <person name="Dooley C.M."/>
            <person name="Ersan-Urun Z."/>
            <person name="Eser C."/>
            <person name="Geiger H."/>
            <person name="Geisler M."/>
            <person name="Karotki L."/>
            <person name="Kirn A."/>
            <person name="Konantz J."/>
            <person name="Konantz M."/>
            <person name="Oberlander M."/>
            <person name="Rudolph-Geiger S."/>
            <person name="Teucke M."/>
            <person name="Lanz C."/>
            <person name="Raddatz G."/>
            <person name="Osoegawa K."/>
            <person name="Zhu B."/>
            <person name="Rapp A."/>
            <person name="Widaa S."/>
            <person name="Langford C."/>
            <person name="Yang F."/>
            <person name="Schuster S.C."/>
            <person name="Carter N.P."/>
            <person name="Harrow J."/>
            <person name="Ning Z."/>
            <person name="Herrero J."/>
            <person name="Searle S.M."/>
            <person name="Enright A."/>
            <person name="Geisler R."/>
            <person name="Plasterk R.H."/>
            <person name="Lee C."/>
            <person name="Westerfield M."/>
            <person name="de Jong P.J."/>
            <person name="Zon L.I."/>
            <person name="Postlethwait J.H."/>
            <person name="Nusslein-Volhard C."/>
            <person name="Hubbard T.J."/>
            <person name="Roest Crollius H."/>
            <person name="Rogers J."/>
            <person name="Stemple D.L."/>
        </authorList>
    </citation>
    <scope>NUCLEOTIDE SEQUENCE [LARGE SCALE GENOMIC DNA]</scope>
    <source>
        <strain>Tuebingen</strain>
    </source>
</reference>
<reference key="4">
    <citation type="submission" date="2003-11" db="EMBL/GenBank/DDBJ databases">
        <authorList>
            <consortium name="NIH - Zebrafish Gene Collection (ZGC) project"/>
        </authorList>
    </citation>
    <scope>NUCLEOTIDE SEQUENCE [LARGE SCALE MRNA]</scope>
    <source>
        <tissue>Retina</tissue>
    </source>
</reference>
<keyword id="KW-0157">Chromophore</keyword>
<keyword id="KW-1015">Disulfide bond</keyword>
<keyword id="KW-0297">G-protein coupled receptor</keyword>
<keyword id="KW-0325">Glycoprotein</keyword>
<keyword id="KW-0472">Membrane</keyword>
<keyword id="KW-0597">Phosphoprotein</keyword>
<keyword id="KW-0600">Photoreceptor protein</keyword>
<keyword id="KW-0675">Receptor</keyword>
<keyword id="KW-1185">Reference proteome</keyword>
<keyword id="KW-0681">Retinal protein</keyword>
<keyword id="KW-0716">Sensory transduction</keyword>
<keyword id="KW-0807">Transducer</keyword>
<keyword id="KW-0812">Transmembrane</keyword>
<keyword id="KW-1133">Transmembrane helix</keyword>
<keyword id="KW-0844">Vision</keyword>
<dbReference type="EMBL" id="AF109370">
    <property type="protein sequence ID" value="AAD24753.1"/>
    <property type="molecule type" value="mRNA"/>
</dbReference>
<dbReference type="EMBL" id="AB087808">
    <property type="protein sequence ID" value="BAC24132.1"/>
    <property type="molecule type" value="Genomic_DNA"/>
</dbReference>
<dbReference type="EMBL" id="AL732567">
    <property type="protein sequence ID" value="CAD87809.1"/>
    <property type="molecule type" value="Genomic_DNA"/>
</dbReference>
<dbReference type="EMBL" id="BC059503">
    <property type="protein sequence ID" value="AAH59503.1"/>
    <property type="molecule type" value="mRNA"/>
</dbReference>
<dbReference type="RefSeq" id="NP_571329.1">
    <property type="nucleotide sequence ID" value="NM_131254.1"/>
</dbReference>
<dbReference type="SMR" id="Q9W6A6"/>
<dbReference type="FunCoup" id="Q9W6A6">
    <property type="interactions" value="46"/>
</dbReference>
<dbReference type="STRING" id="7955.ENSDARP00000000979"/>
<dbReference type="GlyCosmos" id="Q9W6A6">
    <property type="glycosylation" value="3 sites, No reported glycans"/>
</dbReference>
<dbReference type="PaxDb" id="7955-ENSDARP00000000979"/>
<dbReference type="Ensembl" id="ENSDART00000000678">
    <property type="protein sequence ID" value="ENSDARP00000000979"/>
    <property type="gene ID" value="ENSDARG00000000638"/>
</dbReference>
<dbReference type="GeneID" id="30504"/>
<dbReference type="KEGG" id="dre:30504"/>
<dbReference type="AGR" id="ZFIN:ZDB-GENE-990604-43"/>
<dbReference type="CTD" id="30504"/>
<dbReference type="ZFIN" id="ZDB-GENE-990604-43">
    <property type="gene designation" value="opn1mw4"/>
</dbReference>
<dbReference type="eggNOG" id="KOG3656">
    <property type="taxonomic scope" value="Eukaryota"/>
</dbReference>
<dbReference type="HOGENOM" id="CLU_009579_3_0_1"/>
<dbReference type="InParanoid" id="Q9W6A6"/>
<dbReference type="OMA" id="FFTWIMA"/>
<dbReference type="OrthoDB" id="5962323at2759"/>
<dbReference type="PhylomeDB" id="Q9W6A6"/>
<dbReference type="TreeFam" id="TF324998"/>
<dbReference type="PRO" id="PR:Q9W6A6"/>
<dbReference type="Proteomes" id="UP000000437">
    <property type="component" value="Chromosome 6"/>
</dbReference>
<dbReference type="Bgee" id="ENSDARG00000000638">
    <property type="expression patterns" value="Expressed in eyeball of camera-type eye and 1 other cell type or tissue"/>
</dbReference>
<dbReference type="GO" id="GO:0001750">
    <property type="term" value="C:photoreceptor outer segment"/>
    <property type="evidence" value="ECO:0000318"/>
    <property type="project" value="GO_Central"/>
</dbReference>
<dbReference type="GO" id="GO:0005886">
    <property type="term" value="C:plasma membrane"/>
    <property type="evidence" value="ECO:0000318"/>
    <property type="project" value="GO_Central"/>
</dbReference>
<dbReference type="GO" id="GO:0008020">
    <property type="term" value="F:G protein-coupled photoreceptor activity"/>
    <property type="evidence" value="ECO:0000318"/>
    <property type="project" value="GO_Central"/>
</dbReference>
<dbReference type="GO" id="GO:0009881">
    <property type="term" value="F:photoreceptor activity"/>
    <property type="evidence" value="ECO:0000303"/>
    <property type="project" value="UniProtKB"/>
</dbReference>
<dbReference type="GO" id="GO:0071482">
    <property type="term" value="P:cellular response to light stimulus"/>
    <property type="evidence" value="ECO:0000318"/>
    <property type="project" value="GO_Central"/>
</dbReference>
<dbReference type="GO" id="GO:0007186">
    <property type="term" value="P:G protein-coupled receptor signaling pathway"/>
    <property type="evidence" value="ECO:0000318"/>
    <property type="project" value="GO_Central"/>
</dbReference>
<dbReference type="GO" id="GO:0007602">
    <property type="term" value="P:phototransduction"/>
    <property type="evidence" value="ECO:0000318"/>
    <property type="project" value="GO_Central"/>
</dbReference>
<dbReference type="GO" id="GO:0007601">
    <property type="term" value="P:visual perception"/>
    <property type="evidence" value="ECO:0000303"/>
    <property type="project" value="UniProtKB"/>
</dbReference>
<dbReference type="FunFam" id="1.20.1070.10:FF:000018">
    <property type="entry name" value="Rhodopsin"/>
    <property type="match status" value="1"/>
</dbReference>
<dbReference type="Gene3D" id="1.20.1070.10">
    <property type="entry name" value="Rhodopsin 7-helix transmembrane proteins"/>
    <property type="match status" value="1"/>
</dbReference>
<dbReference type="InterPro" id="IPR050125">
    <property type="entry name" value="GPCR_opsins"/>
</dbReference>
<dbReference type="InterPro" id="IPR000276">
    <property type="entry name" value="GPCR_Rhodpsn"/>
</dbReference>
<dbReference type="InterPro" id="IPR017452">
    <property type="entry name" value="GPCR_Rhodpsn_7TM"/>
</dbReference>
<dbReference type="InterPro" id="IPR001760">
    <property type="entry name" value="Opsin"/>
</dbReference>
<dbReference type="InterPro" id="IPR027430">
    <property type="entry name" value="Retinal_BS"/>
</dbReference>
<dbReference type="InterPro" id="IPR000732">
    <property type="entry name" value="Rhodopsin"/>
</dbReference>
<dbReference type="InterPro" id="IPR019477">
    <property type="entry name" value="Rhodopsin_N"/>
</dbReference>
<dbReference type="PANTHER" id="PTHR24240">
    <property type="entry name" value="OPSIN"/>
    <property type="match status" value="1"/>
</dbReference>
<dbReference type="Pfam" id="PF00001">
    <property type="entry name" value="7tm_1"/>
    <property type="match status" value="1"/>
</dbReference>
<dbReference type="Pfam" id="PF10413">
    <property type="entry name" value="Rhodopsin_N"/>
    <property type="match status" value="1"/>
</dbReference>
<dbReference type="PRINTS" id="PR00237">
    <property type="entry name" value="GPCRRHODOPSN"/>
</dbReference>
<dbReference type="PRINTS" id="PR00238">
    <property type="entry name" value="OPSIN"/>
</dbReference>
<dbReference type="PRINTS" id="PR00579">
    <property type="entry name" value="RHODOPSIN"/>
</dbReference>
<dbReference type="SUPFAM" id="SSF81321">
    <property type="entry name" value="Family A G protein-coupled receptor-like"/>
    <property type="match status" value="1"/>
</dbReference>
<dbReference type="PROSITE" id="PS00237">
    <property type="entry name" value="G_PROTEIN_RECEP_F1_1"/>
    <property type="match status" value="1"/>
</dbReference>
<dbReference type="PROSITE" id="PS50262">
    <property type="entry name" value="G_PROTEIN_RECEP_F1_2"/>
    <property type="match status" value="1"/>
</dbReference>
<dbReference type="PROSITE" id="PS00238">
    <property type="entry name" value="OPSIN"/>
    <property type="match status" value="1"/>
</dbReference>
<comment type="function">
    <text>Visual pigments are the light-absorbing molecules that mediate vision. They consist of an apoprotein, opsin, covalently linked to cis-retinal.</text>
</comment>
<comment type="biophysicochemical properties">
    <absorption>
        <max evidence="6">505 nm</max>
    </absorption>
</comment>
<comment type="subcellular location">
    <subcellularLocation>
        <location>Membrane</location>
        <topology>Multi-pass membrane protein</topology>
    </subcellularLocation>
</comment>
<comment type="tissue specificity">
    <text evidence="5">Retinal double cone accessory photoreceptor cell outer segments.</text>
</comment>
<comment type="PTM">
    <text evidence="1">Phosphorylated on some or all of the serine and threonine residues present in the C-terminal region.</text>
</comment>
<comment type="similarity">
    <text evidence="3">Belongs to the G-protein coupled receptor 1 family. Opsin subfamily.</text>
</comment>
<organism>
    <name type="scientific">Danio rerio</name>
    <name type="common">Zebrafish</name>
    <name type="synonym">Brachydanio rerio</name>
    <dbReference type="NCBI Taxonomy" id="7955"/>
    <lineage>
        <taxon>Eukaryota</taxon>
        <taxon>Metazoa</taxon>
        <taxon>Chordata</taxon>
        <taxon>Craniata</taxon>
        <taxon>Vertebrata</taxon>
        <taxon>Euteleostomi</taxon>
        <taxon>Actinopterygii</taxon>
        <taxon>Neopterygii</taxon>
        <taxon>Teleostei</taxon>
        <taxon>Ostariophysi</taxon>
        <taxon>Cypriniformes</taxon>
        <taxon>Danionidae</taxon>
        <taxon>Danioninae</taxon>
        <taxon>Danio</taxon>
    </lineage>
</organism>